<geneLocation type="mitochondrion"/>
<protein>
    <recommendedName>
        <fullName>Cytochrome b</fullName>
    </recommendedName>
    <alternativeName>
        <fullName>Complex III subunit 3</fullName>
    </alternativeName>
    <alternativeName>
        <fullName>Complex III subunit III</fullName>
    </alternativeName>
    <alternativeName>
        <fullName>Cytochrome b-c1 complex subunit 3</fullName>
    </alternativeName>
    <alternativeName>
        <fullName>Ubiquinol-cytochrome-c reductase complex cytochrome b subunit</fullName>
    </alternativeName>
</protein>
<proteinExistence type="inferred from homology"/>
<gene>
    <name type="primary">MT-CYB</name>
    <name type="synonym">COB</name>
    <name type="synonym">CYTB</name>
    <name type="synonym">MTCYB</name>
</gene>
<name>CYB_CHROW</name>
<feature type="chain" id="PRO_0000060786" description="Cytochrome b">
    <location>
        <begin position="1"/>
        <end position="379"/>
    </location>
</feature>
<feature type="transmembrane region" description="Helical" evidence="2">
    <location>
        <begin position="33"/>
        <end position="53"/>
    </location>
</feature>
<feature type="transmembrane region" description="Helical" evidence="2">
    <location>
        <begin position="77"/>
        <end position="98"/>
    </location>
</feature>
<feature type="transmembrane region" description="Helical" evidence="2">
    <location>
        <begin position="113"/>
        <end position="133"/>
    </location>
</feature>
<feature type="transmembrane region" description="Helical" evidence="2">
    <location>
        <begin position="178"/>
        <end position="198"/>
    </location>
</feature>
<feature type="transmembrane region" description="Helical" evidence="2">
    <location>
        <begin position="226"/>
        <end position="246"/>
    </location>
</feature>
<feature type="transmembrane region" description="Helical" evidence="2">
    <location>
        <begin position="288"/>
        <end position="308"/>
    </location>
</feature>
<feature type="transmembrane region" description="Helical" evidence="2">
    <location>
        <begin position="320"/>
        <end position="340"/>
    </location>
</feature>
<feature type="transmembrane region" description="Helical" evidence="2">
    <location>
        <begin position="347"/>
        <end position="367"/>
    </location>
</feature>
<feature type="binding site" description="axial binding residue" evidence="2">
    <location>
        <position position="83"/>
    </location>
    <ligand>
        <name>heme b</name>
        <dbReference type="ChEBI" id="CHEBI:60344"/>
        <label>b562</label>
    </ligand>
    <ligandPart>
        <name>Fe</name>
        <dbReference type="ChEBI" id="CHEBI:18248"/>
    </ligandPart>
</feature>
<feature type="binding site" description="axial binding residue" evidence="2">
    <location>
        <position position="97"/>
    </location>
    <ligand>
        <name>heme b</name>
        <dbReference type="ChEBI" id="CHEBI:60344"/>
        <label>b566</label>
    </ligand>
    <ligandPart>
        <name>Fe</name>
        <dbReference type="ChEBI" id="CHEBI:18248"/>
    </ligandPart>
</feature>
<feature type="binding site" description="axial binding residue" evidence="2">
    <location>
        <position position="182"/>
    </location>
    <ligand>
        <name>heme b</name>
        <dbReference type="ChEBI" id="CHEBI:60344"/>
        <label>b562</label>
    </ligand>
    <ligandPart>
        <name>Fe</name>
        <dbReference type="ChEBI" id="CHEBI:18248"/>
    </ligandPart>
</feature>
<feature type="binding site" description="axial binding residue" evidence="2">
    <location>
        <position position="196"/>
    </location>
    <ligand>
        <name>heme b</name>
        <dbReference type="ChEBI" id="CHEBI:60344"/>
        <label>b566</label>
    </ligand>
    <ligandPart>
        <name>Fe</name>
        <dbReference type="ChEBI" id="CHEBI:18248"/>
    </ligandPart>
</feature>
<feature type="binding site" evidence="2">
    <location>
        <position position="201"/>
    </location>
    <ligand>
        <name>a ubiquinone</name>
        <dbReference type="ChEBI" id="CHEBI:16389"/>
    </ligand>
</feature>
<keyword id="KW-0249">Electron transport</keyword>
<keyword id="KW-0349">Heme</keyword>
<keyword id="KW-0408">Iron</keyword>
<keyword id="KW-0472">Membrane</keyword>
<keyword id="KW-0479">Metal-binding</keyword>
<keyword id="KW-0496">Mitochondrion</keyword>
<keyword id="KW-0999">Mitochondrion inner membrane</keyword>
<keyword id="KW-0679">Respiratory chain</keyword>
<keyword id="KW-0812">Transmembrane</keyword>
<keyword id="KW-1133">Transmembrane helix</keyword>
<keyword id="KW-0813">Transport</keyword>
<keyword id="KW-0830">Ubiquinone</keyword>
<sequence length="379" mass="42671">MTNIRKSHPIAKIMNESFIDLPAPSNISAWWNFGSLLGICLILQILTGLFLAMHYSSDTMTAFSSVTHICRDVNHGWMIRYMHANGASLFFICLFMHVGRGVYYGSYTFSETWNIGILLLLTVMATAFMGYVLPWGQMSFWGATVITNLLSAIPYIGTNLVEWIWGGFSVDKATLTRFFAFHFILPFIISALAAVHLLFLHETGSNNPSGMMSDSDKIPFHPYYTIKDILGLLFLILALMLLVLFSPDLLGDPDNYTPANPLNTPPHIKPEWYFLFAYAILRSIPNKLGGVLPHAMSILILPIIPMLHTSKQRSIMFRPLSQCMFWLLVADLPILTWIGGQPVEYPFITIGQLASVYISSILLXLMPIFGIIENHSVKW</sequence>
<accession>Q9B9F5</accession>
<evidence type="ECO:0000250" key="1"/>
<evidence type="ECO:0000250" key="2">
    <source>
        <dbReference type="UniProtKB" id="P00157"/>
    </source>
</evidence>
<evidence type="ECO:0000255" key="3">
    <source>
        <dbReference type="PROSITE-ProRule" id="PRU00967"/>
    </source>
</evidence>
<evidence type="ECO:0000255" key="4">
    <source>
        <dbReference type="PROSITE-ProRule" id="PRU00968"/>
    </source>
</evidence>
<organism>
    <name type="scientific">Chrotogale owstoni</name>
    <name type="common">Owston's palm civet</name>
    <dbReference type="NCBI Taxonomy" id="94184"/>
    <lineage>
        <taxon>Eukaryota</taxon>
        <taxon>Metazoa</taxon>
        <taxon>Chordata</taxon>
        <taxon>Craniata</taxon>
        <taxon>Vertebrata</taxon>
        <taxon>Euteleostomi</taxon>
        <taxon>Mammalia</taxon>
        <taxon>Eutheria</taxon>
        <taxon>Laurasiatheria</taxon>
        <taxon>Carnivora</taxon>
        <taxon>Feliformia</taxon>
        <taxon>Viverridae</taxon>
        <taxon>Hemigalinae</taxon>
        <taxon>Chrotogale</taxon>
    </lineage>
</organism>
<dbReference type="EMBL" id="AF125144">
    <property type="protein sequence ID" value="AAG60335.2"/>
    <property type="molecule type" value="Genomic_DNA"/>
</dbReference>
<dbReference type="GO" id="GO:0005743">
    <property type="term" value="C:mitochondrial inner membrane"/>
    <property type="evidence" value="ECO:0007669"/>
    <property type="project" value="UniProtKB-SubCell"/>
</dbReference>
<dbReference type="GO" id="GO:0045275">
    <property type="term" value="C:respiratory chain complex III"/>
    <property type="evidence" value="ECO:0007669"/>
    <property type="project" value="InterPro"/>
</dbReference>
<dbReference type="GO" id="GO:0046872">
    <property type="term" value="F:metal ion binding"/>
    <property type="evidence" value="ECO:0007669"/>
    <property type="project" value="UniProtKB-KW"/>
</dbReference>
<dbReference type="GO" id="GO:0008121">
    <property type="term" value="F:ubiquinol-cytochrome-c reductase activity"/>
    <property type="evidence" value="ECO:0007669"/>
    <property type="project" value="InterPro"/>
</dbReference>
<dbReference type="GO" id="GO:0006122">
    <property type="term" value="P:mitochondrial electron transport, ubiquinol to cytochrome c"/>
    <property type="evidence" value="ECO:0007669"/>
    <property type="project" value="TreeGrafter"/>
</dbReference>
<dbReference type="CDD" id="cd00290">
    <property type="entry name" value="cytochrome_b_C"/>
    <property type="match status" value="1"/>
</dbReference>
<dbReference type="CDD" id="cd00284">
    <property type="entry name" value="Cytochrome_b_N"/>
    <property type="match status" value="1"/>
</dbReference>
<dbReference type="FunFam" id="1.20.810.10:FF:000002">
    <property type="entry name" value="Cytochrome b"/>
    <property type="match status" value="1"/>
</dbReference>
<dbReference type="Gene3D" id="1.20.810.10">
    <property type="entry name" value="Cytochrome Bc1 Complex, Chain C"/>
    <property type="match status" value="1"/>
</dbReference>
<dbReference type="InterPro" id="IPR005798">
    <property type="entry name" value="Cyt_b/b6_C"/>
</dbReference>
<dbReference type="InterPro" id="IPR036150">
    <property type="entry name" value="Cyt_b/b6_C_sf"/>
</dbReference>
<dbReference type="InterPro" id="IPR005797">
    <property type="entry name" value="Cyt_b/b6_N"/>
</dbReference>
<dbReference type="InterPro" id="IPR027387">
    <property type="entry name" value="Cytb/b6-like_sf"/>
</dbReference>
<dbReference type="InterPro" id="IPR030689">
    <property type="entry name" value="Cytochrome_b"/>
</dbReference>
<dbReference type="InterPro" id="IPR048260">
    <property type="entry name" value="Cytochrome_b_C_euk/bac"/>
</dbReference>
<dbReference type="InterPro" id="IPR048259">
    <property type="entry name" value="Cytochrome_b_N_euk/bac"/>
</dbReference>
<dbReference type="InterPro" id="IPR016174">
    <property type="entry name" value="Di-haem_cyt_TM"/>
</dbReference>
<dbReference type="PANTHER" id="PTHR19271">
    <property type="entry name" value="CYTOCHROME B"/>
    <property type="match status" value="1"/>
</dbReference>
<dbReference type="PANTHER" id="PTHR19271:SF16">
    <property type="entry name" value="CYTOCHROME B"/>
    <property type="match status" value="1"/>
</dbReference>
<dbReference type="Pfam" id="PF00032">
    <property type="entry name" value="Cytochrom_B_C"/>
    <property type="match status" value="1"/>
</dbReference>
<dbReference type="Pfam" id="PF00033">
    <property type="entry name" value="Cytochrome_B"/>
    <property type="match status" value="1"/>
</dbReference>
<dbReference type="PIRSF" id="PIRSF038885">
    <property type="entry name" value="COB"/>
    <property type="match status" value="1"/>
</dbReference>
<dbReference type="SUPFAM" id="SSF81648">
    <property type="entry name" value="a domain/subunit of cytochrome bc1 complex (Ubiquinol-cytochrome c reductase)"/>
    <property type="match status" value="1"/>
</dbReference>
<dbReference type="SUPFAM" id="SSF81342">
    <property type="entry name" value="Transmembrane di-heme cytochromes"/>
    <property type="match status" value="1"/>
</dbReference>
<dbReference type="PROSITE" id="PS51003">
    <property type="entry name" value="CYTB_CTER"/>
    <property type="match status" value="1"/>
</dbReference>
<dbReference type="PROSITE" id="PS51002">
    <property type="entry name" value="CYTB_NTER"/>
    <property type="match status" value="1"/>
</dbReference>
<reference key="1">
    <citation type="journal article" date="2004" name="Zool. Scr.">
        <title>First molecular evidence for reassessing phylogenetic affinities between genets (Genetta) and the enigmatic genet-like taxa Osbornictis, Poiana and Prionodon (Carnivora, Viverridae).</title>
        <authorList>
            <person name="Gaubert P."/>
            <person name="Tranier M."/>
            <person name="Delmas A.-S."/>
            <person name="Colyn M."/>
            <person name="Veron G."/>
        </authorList>
    </citation>
    <scope>NUCLEOTIDE SEQUENCE [GENOMIC DNA]</scope>
</reference>
<comment type="function">
    <text evidence="2">Component of the ubiquinol-cytochrome c reductase complex (complex III or cytochrome b-c1 complex) that is part of the mitochondrial respiratory chain. The b-c1 complex mediates electron transfer from ubiquinol to cytochrome c. Contributes to the generation of a proton gradient across the mitochondrial membrane that is then used for ATP synthesis.</text>
</comment>
<comment type="cofactor">
    <cofactor evidence="2">
        <name>heme b</name>
        <dbReference type="ChEBI" id="CHEBI:60344"/>
    </cofactor>
    <text evidence="2">Binds 2 heme b groups non-covalently.</text>
</comment>
<comment type="subunit">
    <text evidence="2">The cytochrome bc1 complex contains 11 subunits: 3 respiratory subunits (MT-CYB, CYC1 and UQCRFS1), 2 core proteins (UQCRC1 and UQCRC2) and 6 low-molecular weight proteins (UQCRH/QCR6, UQCRB/QCR7, UQCRQ/QCR8, UQCR10/QCR9, UQCR11/QCR10 and a cleavage product of UQCRFS1). This cytochrome bc1 complex then forms a dimer.</text>
</comment>
<comment type="subcellular location">
    <subcellularLocation>
        <location evidence="2">Mitochondrion inner membrane</location>
        <topology evidence="2">Multi-pass membrane protein</topology>
    </subcellularLocation>
</comment>
<comment type="miscellaneous">
    <text evidence="1">Heme 1 (or BL or b562) is low-potential and absorbs at about 562 nm, and heme 2 (or BH or b566) is high-potential and absorbs at about 566 nm.</text>
</comment>
<comment type="similarity">
    <text evidence="3 4">Belongs to the cytochrome b family.</text>
</comment>
<comment type="caution">
    <text evidence="2">The full-length protein contains only eight transmembrane helices, not nine as predicted by bioinformatics tools.</text>
</comment>